<proteinExistence type="inferred from homology"/>
<dbReference type="EC" id="2.8.1.8" evidence="1"/>
<dbReference type="EMBL" id="CR767821">
    <property type="protein sequence ID" value="CAH58258.1"/>
    <property type="molecule type" value="Genomic_DNA"/>
</dbReference>
<dbReference type="EMBL" id="CR925678">
    <property type="protein sequence ID" value="CAI27049.1"/>
    <property type="molecule type" value="Genomic_DNA"/>
</dbReference>
<dbReference type="RefSeq" id="WP_011155209.1">
    <property type="nucleotide sequence ID" value="NC_005295.2"/>
</dbReference>
<dbReference type="SMR" id="Q5HB02"/>
<dbReference type="GeneID" id="33057671"/>
<dbReference type="KEGG" id="eru:Erum5290"/>
<dbReference type="KEGG" id="erw:ERWE_CDS_05550"/>
<dbReference type="eggNOG" id="COG0320">
    <property type="taxonomic scope" value="Bacteria"/>
</dbReference>
<dbReference type="HOGENOM" id="CLU_033144_2_1_5"/>
<dbReference type="UniPathway" id="UPA00538">
    <property type="reaction ID" value="UER00593"/>
</dbReference>
<dbReference type="Proteomes" id="UP000001021">
    <property type="component" value="Chromosome"/>
</dbReference>
<dbReference type="GO" id="GO:0005737">
    <property type="term" value="C:cytoplasm"/>
    <property type="evidence" value="ECO:0007669"/>
    <property type="project" value="UniProtKB-SubCell"/>
</dbReference>
<dbReference type="GO" id="GO:0051539">
    <property type="term" value="F:4 iron, 4 sulfur cluster binding"/>
    <property type="evidence" value="ECO:0007669"/>
    <property type="project" value="UniProtKB-UniRule"/>
</dbReference>
<dbReference type="GO" id="GO:0016992">
    <property type="term" value="F:lipoate synthase activity"/>
    <property type="evidence" value="ECO:0007669"/>
    <property type="project" value="UniProtKB-UniRule"/>
</dbReference>
<dbReference type="GO" id="GO:0046872">
    <property type="term" value="F:metal ion binding"/>
    <property type="evidence" value="ECO:0007669"/>
    <property type="project" value="UniProtKB-KW"/>
</dbReference>
<dbReference type="CDD" id="cd01335">
    <property type="entry name" value="Radical_SAM"/>
    <property type="match status" value="1"/>
</dbReference>
<dbReference type="FunFam" id="3.20.20.70:FF:000040">
    <property type="entry name" value="Lipoyl synthase"/>
    <property type="match status" value="1"/>
</dbReference>
<dbReference type="Gene3D" id="3.20.20.70">
    <property type="entry name" value="Aldolase class I"/>
    <property type="match status" value="1"/>
</dbReference>
<dbReference type="HAMAP" id="MF_00206">
    <property type="entry name" value="Lipoyl_synth"/>
    <property type="match status" value="1"/>
</dbReference>
<dbReference type="InterPro" id="IPR013785">
    <property type="entry name" value="Aldolase_TIM"/>
</dbReference>
<dbReference type="InterPro" id="IPR006638">
    <property type="entry name" value="Elp3/MiaA/NifB-like_rSAM"/>
</dbReference>
<dbReference type="InterPro" id="IPR031691">
    <property type="entry name" value="LIAS_N"/>
</dbReference>
<dbReference type="InterPro" id="IPR003698">
    <property type="entry name" value="Lipoyl_synth"/>
</dbReference>
<dbReference type="InterPro" id="IPR007197">
    <property type="entry name" value="rSAM"/>
</dbReference>
<dbReference type="NCBIfam" id="TIGR00510">
    <property type="entry name" value="lipA"/>
    <property type="match status" value="1"/>
</dbReference>
<dbReference type="NCBIfam" id="NF004019">
    <property type="entry name" value="PRK05481.1"/>
    <property type="match status" value="1"/>
</dbReference>
<dbReference type="NCBIfam" id="NF009544">
    <property type="entry name" value="PRK12928.1"/>
    <property type="match status" value="1"/>
</dbReference>
<dbReference type="PANTHER" id="PTHR10949">
    <property type="entry name" value="LIPOYL SYNTHASE"/>
    <property type="match status" value="1"/>
</dbReference>
<dbReference type="PANTHER" id="PTHR10949:SF0">
    <property type="entry name" value="LIPOYL SYNTHASE, MITOCHONDRIAL"/>
    <property type="match status" value="1"/>
</dbReference>
<dbReference type="Pfam" id="PF16881">
    <property type="entry name" value="LIAS_N"/>
    <property type="match status" value="1"/>
</dbReference>
<dbReference type="Pfam" id="PF04055">
    <property type="entry name" value="Radical_SAM"/>
    <property type="match status" value="1"/>
</dbReference>
<dbReference type="PIRSF" id="PIRSF005963">
    <property type="entry name" value="Lipoyl_synth"/>
    <property type="match status" value="1"/>
</dbReference>
<dbReference type="SFLD" id="SFLDF00271">
    <property type="entry name" value="lipoyl_synthase"/>
    <property type="match status" value="1"/>
</dbReference>
<dbReference type="SFLD" id="SFLDG01058">
    <property type="entry name" value="lipoyl_synthase_like"/>
    <property type="match status" value="1"/>
</dbReference>
<dbReference type="SMART" id="SM00729">
    <property type="entry name" value="Elp3"/>
    <property type="match status" value="1"/>
</dbReference>
<dbReference type="SUPFAM" id="SSF102114">
    <property type="entry name" value="Radical SAM enzymes"/>
    <property type="match status" value="1"/>
</dbReference>
<dbReference type="PROSITE" id="PS51918">
    <property type="entry name" value="RADICAL_SAM"/>
    <property type="match status" value="1"/>
</dbReference>
<comment type="function">
    <text evidence="1">Catalyzes the radical-mediated insertion of two sulfur atoms into the C-6 and C-8 positions of the octanoyl moiety bound to the lipoyl domains of lipoate-dependent enzymes, thereby converting the octanoylated domains into lipoylated derivatives.</text>
</comment>
<comment type="catalytic activity">
    <reaction evidence="1">
        <text>[[Fe-S] cluster scaffold protein carrying a second [4Fe-4S](2+) cluster] + N(6)-octanoyl-L-lysyl-[protein] + 2 oxidized [2Fe-2S]-[ferredoxin] + 2 S-adenosyl-L-methionine + 4 H(+) = [[Fe-S] cluster scaffold protein] + N(6)-[(R)-dihydrolipoyl]-L-lysyl-[protein] + 4 Fe(3+) + 2 hydrogen sulfide + 2 5'-deoxyadenosine + 2 L-methionine + 2 reduced [2Fe-2S]-[ferredoxin]</text>
        <dbReference type="Rhea" id="RHEA:16585"/>
        <dbReference type="Rhea" id="RHEA-COMP:9928"/>
        <dbReference type="Rhea" id="RHEA-COMP:10000"/>
        <dbReference type="Rhea" id="RHEA-COMP:10001"/>
        <dbReference type="Rhea" id="RHEA-COMP:10475"/>
        <dbReference type="Rhea" id="RHEA-COMP:14568"/>
        <dbReference type="Rhea" id="RHEA-COMP:14569"/>
        <dbReference type="ChEBI" id="CHEBI:15378"/>
        <dbReference type="ChEBI" id="CHEBI:17319"/>
        <dbReference type="ChEBI" id="CHEBI:29034"/>
        <dbReference type="ChEBI" id="CHEBI:29919"/>
        <dbReference type="ChEBI" id="CHEBI:33722"/>
        <dbReference type="ChEBI" id="CHEBI:33737"/>
        <dbReference type="ChEBI" id="CHEBI:33738"/>
        <dbReference type="ChEBI" id="CHEBI:57844"/>
        <dbReference type="ChEBI" id="CHEBI:59789"/>
        <dbReference type="ChEBI" id="CHEBI:78809"/>
        <dbReference type="ChEBI" id="CHEBI:83100"/>
        <dbReference type="EC" id="2.8.1.8"/>
    </reaction>
</comment>
<comment type="cofactor">
    <cofactor evidence="1">
        <name>[4Fe-4S] cluster</name>
        <dbReference type="ChEBI" id="CHEBI:49883"/>
    </cofactor>
    <text evidence="1">Binds 2 [4Fe-4S] clusters per subunit. One cluster is coordinated with 3 cysteines and an exchangeable S-adenosyl-L-methionine.</text>
</comment>
<comment type="pathway">
    <text evidence="1">Protein modification; protein lipoylation via endogenous pathway; protein N(6)-(lipoyl)lysine from octanoyl-[acyl-carrier-protein]: step 2/2.</text>
</comment>
<comment type="subcellular location">
    <subcellularLocation>
        <location evidence="1">Cytoplasm</location>
    </subcellularLocation>
</comment>
<comment type="similarity">
    <text evidence="1">Belongs to the radical SAM superfamily. Lipoyl synthase family.</text>
</comment>
<accession>Q5HB02</accession>
<accession>Q5FEQ5</accession>
<keyword id="KW-0004">4Fe-4S</keyword>
<keyword id="KW-0963">Cytoplasm</keyword>
<keyword id="KW-0408">Iron</keyword>
<keyword id="KW-0411">Iron-sulfur</keyword>
<keyword id="KW-0479">Metal-binding</keyword>
<keyword id="KW-0949">S-adenosyl-L-methionine</keyword>
<keyword id="KW-0808">Transferase</keyword>
<protein>
    <recommendedName>
        <fullName evidence="1">Lipoyl synthase</fullName>
        <ecNumber evidence="1">2.8.1.8</ecNumber>
    </recommendedName>
    <alternativeName>
        <fullName evidence="1">Lip-syn</fullName>
        <shortName evidence="1">LS</shortName>
    </alternativeName>
    <alternativeName>
        <fullName evidence="1">Lipoate synthase</fullName>
    </alternativeName>
    <alternativeName>
        <fullName evidence="1">Lipoic acid synthase</fullName>
    </alternativeName>
    <alternativeName>
        <fullName evidence="1">Sulfur insertion protein LipA</fullName>
    </alternativeName>
</protein>
<sequence length="292" mass="33219">MKSKPDWLKVKMPTGSAFYEMRNLMKLHKLNTVCEEAACPNIGECWNKKHATVMILGSTCTRACAFCNVASGIPDKLDPHEPQSLAKAVSSLKLQHVVITSVDRDDLEDGGAGHFVECIEEIRKRDSNVTIEILTPDFLNKHDAIDKIAKAFPDVYNHNVETVPRLYAKIRPKARYFHSLYLLKTIKQKNPRIFTKSGIMVGLGELKEEIYQVMDDLRSADVDFIVIGQYLQPTSKHAVVDRYVTPEEFDHYKYVAYSKGFLMVASGPLVRSSYHAEEDFQRLKKNRAAMYT</sequence>
<feature type="chain" id="PRO_1000012219" description="Lipoyl synthase">
    <location>
        <begin position="1"/>
        <end position="292"/>
    </location>
</feature>
<feature type="domain" description="Radical SAM core" evidence="2">
    <location>
        <begin position="46"/>
        <end position="262"/>
    </location>
</feature>
<feature type="binding site" evidence="1">
    <location>
        <position position="34"/>
    </location>
    <ligand>
        <name>[4Fe-4S] cluster</name>
        <dbReference type="ChEBI" id="CHEBI:49883"/>
        <label>1</label>
    </ligand>
</feature>
<feature type="binding site" evidence="1">
    <location>
        <position position="39"/>
    </location>
    <ligand>
        <name>[4Fe-4S] cluster</name>
        <dbReference type="ChEBI" id="CHEBI:49883"/>
        <label>1</label>
    </ligand>
</feature>
<feature type="binding site" evidence="1">
    <location>
        <position position="45"/>
    </location>
    <ligand>
        <name>[4Fe-4S] cluster</name>
        <dbReference type="ChEBI" id="CHEBI:49883"/>
        <label>1</label>
    </ligand>
</feature>
<feature type="binding site" evidence="1">
    <location>
        <position position="60"/>
    </location>
    <ligand>
        <name>[4Fe-4S] cluster</name>
        <dbReference type="ChEBI" id="CHEBI:49883"/>
        <label>2</label>
        <note>4Fe-4S-S-AdoMet</note>
    </ligand>
</feature>
<feature type="binding site" evidence="1">
    <location>
        <position position="64"/>
    </location>
    <ligand>
        <name>[4Fe-4S] cluster</name>
        <dbReference type="ChEBI" id="CHEBI:49883"/>
        <label>2</label>
        <note>4Fe-4S-S-AdoMet</note>
    </ligand>
</feature>
<feature type="binding site" evidence="1">
    <location>
        <position position="67"/>
    </location>
    <ligand>
        <name>[4Fe-4S] cluster</name>
        <dbReference type="ChEBI" id="CHEBI:49883"/>
        <label>2</label>
        <note>4Fe-4S-S-AdoMet</note>
    </ligand>
</feature>
<feature type="binding site" evidence="1">
    <location>
        <position position="273"/>
    </location>
    <ligand>
        <name>[4Fe-4S] cluster</name>
        <dbReference type="ChEBI" id="CHEBI:49883"/>
        <label>1</label>
    </ligand>
</feature>
<evidence type="ECO:0000255" key="1">
    <source>
        <dbReference type="HAMAP-Rule" id="MF_00206"/>
    </source>
</evidence>
<evidence type="ECO:0000255" key="2">
    <source>
        <dbReference type="PROSITE-ProRule" id="PRU01266"/>
    </source>
</evidence>
<gene>
    <name evidence="1" type="primary">lipA</name>
    <name type="ordered locus">Erum5290</name>
    <name type="ordered locus">ERWE_CDS_05550</name>
</gene>
<reference key="1">
    <citation type="journal article" date="2005" name="Proc. Natl. Acad. Sci. U.S.A.">
        <title>The genome of the heartwater agent Ehrlichia ruminantium contains multiple tandem repeats of actively variable copy number.</title>
        <authorList>
            <person name="Collins N.E."/>
            <person name="Liebenberg J."/>
            <person name="de Villiers E.P."/>
            <person name="Brayton K.A."/>
            <person name="Louw E."/>
            <person name="Pretorius A."/>
            <person name="Faber F.E."/>
            <person name="van Heerden H."/>
            <person name="Josemans A."/>
            <person name="van Kleef M."/>
            <person name="Steyn H.C."/>
            <person name="van Strijp M.F."/>
            <person name="Zweygarth E."/>
            <person name="Jongejan F."/>
            <person name="Maillard J.C."/>
            <person name="Berthier D."/>
            <person name="Botha M."/>
            <person name="Joubert F."/>
            <person name="Corton C.H."/>
            <person name="Thomson N.R."/>
            <person name="Allsopp M.T."/>
            <person name="Allsopp B.A."/>
        </authorList>
    </citation>
    <scope>NUCLEOTIDE SEQUENCE [LARGE SCALE GENOMIC DNA]</scope>
    <source>
        <strain>Welgevonden</strain>
    </source>
</reference>
<reference key="2">
    <citation type="journal article" date="2006" name="J. Bacteriol.">
        <title>Comparative genomic analysis of three strains of Ehrlichia ruminantium reveals an active process of genome size plasticity.</title>
        <authorList>
            <person name="Frutos R."/>
            <person name="Viari A."/>
            <person name="Ferraz C."/>
            <person name="Morgat A."/>
            <person name="Eychenie S."/>
            <person name="Kandassamy Y."/>
            <person name="Chantal I."/>
            <person name="Bensaid A."/>
            <person name="Coissac E."/>
            <person name="Vachiery N."/>
            <person name="Demaille J."/>
            <person name="Martinez D."/>
        </authorList>
    </citation>
    <scope>NUCLEOTIDE SEQUENCE [LARGE SCALE GENOMIC DNA]</scope>
    <source>
        <strain>Welgevonden</strain>
    </source>
</reference>
<organism>
    <name type="scientific">Ehrlichia ruminantium (strain Welgevonden)</name>
    <dbReference type="NCBI Taxonomy" id="254945"/>
    <lineage>
        <taxon>Bacteria</taxon>
        <taxon>Pseudomonadati</taxon>
        <taxon>Pseudomonadota</taxon>
        <taxon>Alphaproteobacteria</taxon>
        <taxon>Rickettsiales</taxon>
        <taxon>Anaplasmataceae</taxon>
        <taxon>Ehrlichia</taxon>
    </lineage>
</organism>
<name>LIPA_EHRRW</name>